<name>RL11_THIDA</name>
<feature type="chain" id="PRO_0000258235" description="Large ribosomal subunit protein uL11">
    <location>
        <begin position="1"/>
        <end position="143"/>
    </location>
</feature>
<reference key="1">
    <citation type="journal article" date="2006" name="J. Bacteriol.">
        <title>The genome sequence of the obligately chemolithoautotrophic, facultatively anaerobic bacterium Thiobacillus denitrificans.</title>
        <authorList>
            <person name="Beller H.R."/>
            <person name="Chain P.S."/>
            <person name="Letain T.E."/>
            <person name="Chakicherla A."/>
            <person name="Larimer F.W."/>
            <person name="Richardson P.M."/>
            <person name="Coleman M.A."/>
            <person name="Wood A.P."/>
            <person name="Kelly D.P."/>
        </authorList>
    </citation>
    <scope>NUCLEOTIDE SEQUENCE [LARGE SCALE GENOMIC DNA]</scope>
    <source>
        <strain>ATCC 25259 / T1</strain>
    </source>
</reference>
<sequence length="143" mass="15086">MAKKIVGYIKLQVPAGKANPSPPIGPALGQRGLNIMEFCKAFNAKTQGMEPGLPIPVVITAFADKSFTFIMKTPPATVLIKKAIKLDKGSSKPHTDKVGTITRAQLEEIAKTKEPDLTAADMDAAVRTIAGTARSMGIVVEGV</sequence>
<dbReference type="EMBL" id="CP000116">
    <property type="protein sequence ID" value="AAZ96347.1"/>
    <property type="molecule type" value="Genomic_DNA"/>
</dbReference>
<dbReference type="RefSeq" id="WP_011310907.1">
    <property type="nucleotide sequence ID" value="NC_007404.1"/>
</dbReference>
<dbReference type="SMR" id="Q3SF21"/>
<dbReference type="STRING" id="292415.Tbd_0394"/>
<dbReference type="KEGG" id="tbd:Tbd_0394"/>
<dbReference type="eggNOG" id="COG0080">
    <property type="taxonomic scope" value="Bacteria"/>
</dbReference>
<dbReference type="HOGENOM" id="CLU_074237_2_0_4"/>
<dbReference type="OrthoDB" id="9802408at2"/>
<dbReference type="Proteomes" id="UP000008291">
    <property type="component" value="Chromosome"/>
</dbReference>
<dbReference type="GO" id="GO:0022625">
    <property type="term" value="C:cytosolic large ribosomal subunit"/>
    <property type="evidence" value="ECO:0007669"/>
    <property type="project" value="TreeGrafter"/>
</dbReference>
<dbReference type="GO" id="GO:0070180">
    <property type="term" value="F:large ribosomal subunit rRNA binding"/>
    <property type="evidence" value="ECO:0007669"/>
    <property type="project" value="UniProtKB-UniRule"/>
</dbReference>
<dbReference type="GO" id="GO:0003735">
    <property type="term" value="F:structural constituent of ribosome"/>
    <property type="evidence" value="ECO:0007669"/>
    <property type="project" value="InterPro"/>
</dbReference>
<dbReference type="GO" id="GO:0006412">
    <property type="term" value="P:translation"/>
    <property type="evidence" value="ECO:0007669"/>
    <property type="project" value="UniProtKB-UniRule"/>
</dbReference>
<dbReference type="CDD" id="cd00349">
    <property type="entry name" value="Ribosomal_L11"/>
    <property type="match status" value="1"/>
</dbReference>
<dbReference type="FunFam" id="1.10.10.250:FF:000001">
    <property type="entry name" value="50S ribosomal protein L11"/>
    <property type="match status" value="1"/>
</dbReference>
<dbReference type="FunFam" id="3.30.1550.10:FF:000001">
    <property type="entry name" value="50S ribosomal protein L11"/>
    <property type="match status" value="1"/>
</dbReference>
<dbReference type="Gene3D" id="1.10.10.250">
    <property type="entry name" value="Ribosomal protein L11, C-terminal domain"/>
    <property type="match status" value="1"/>
</dbReference>
<dbReference type="Gene3D" id="3.30.1550.10">
    <property type="entry name" value="Ribosomal protein L11/L12, N-terminal domain"/>
    <property type="match status" value="1"/>
</dbReference>
<dbReference type="HAMAP" id="MF_00736">
    <property type="entry name" value="Ribosomal_uL11"/>
    <property type="match status" value="1"/>
</dbReference>
<dbReference type="InterPro" id="IPR000911">
    <property type="entry name" value="Ribosomal_uL11"/>
</dbReference>
<dbReference type="InterPro" id="IPR006519">
    <property type="entry name" value="Ribosomal_uL11_bac-typ"/>
</dbReference>
<dbReference type="InterPro" id="IPR020783">
    <property type="entry name" value="Ribosomal_uL11_C"/>
</dbReference>
<dbReference type="InterPro" id="IPR036769">
    <property type="entry name" value="Ribosomal_uL11_C_sf"/>
</dbReference>
<dbReference type="InterPro" id="IPR020785">
    <property type="entry name" value="Ribosomal_uL11_CS"/>
</dbReference>
<dbReference type="InterPro" id="IPR020784">
    <property type="entry name" value="Ribosomal_uL11_N"/>
</dbReference>
<dbReference type="InterPro" id="IPR036796">
    <property type="entry name" value="Ribosomal_uL11_N_sf"/>
</dbReference>
<dbReference type="NCBIfam" id="TIGR01632">
    <property type="entry name" value="L11_bact"/>
    <property type="match status" value="1"/>
</dbReference>
<dbReference type="PANTHER" id="PTHR11661">
    <property type="entry name" value="60S RIBOSOMAL PROTEIN L12"/>
    <property type="match status" value="1"/>
</dbReference>
<dbReference type="PANTHER" id="PTHR11661:SF1">
    <property type="entry name" value="LARGE RIBOSOMAL SUBUNIT PROTEIN UL11M"/>
    <property type="match status" value="1"/>
</dbReference>
<dbReference type="Pfam" id="PF00298">
    <property type="entry name" value="Ribosomal_L11"/>
    <property type="match status" value="1"/>
</dbReference>
<dbReference type="Pfam" id="PF03946">
    <property type="entry name" value="Ribosomal_L11_N"/>
    <property type="match status" value="1"/>
</dbReference>
<dbReference type="SMART" id="SM00649">
    <property type="entry name" value="RL11"/>
    <property type="match status" value="1"/>
</dbReference>
<dbReference type="SUPFAM" id="SSF54747">
    <property type="entry name" value="Ribosomal L11/L12e N-terminal domain"/>
    <property type="match status" value="1"/>
</dbReference>
<dbReference type="SUPFAM" id="SSF46906">
    <property type="entry name" value="Ribosomal protein L11, C-terminal domain"/>
    <property type="match status" value="1"/>
</dbReference>
<dbReference type="PROSITE" id="PS00359">
    <property type="entry name" value="RIBOSOMAL_L11"/>
    <property type="match status" value="1"/>
</dbReference>
<proteinExistence type="inferred from homology"/>
<organism>
    <name type="scientific">Thiobacillus denitrificans (strain ATCC 25259 / T1)</name>
    <dbReference type="NCBI Taxonomy" id="292415"/>
    <lineage>
        <taxon>Bacteria</taxon>
        <taxon>Pseudomonadati</taxon>
        <taxon>Pseudomonadota</taxon>
        <taxon>Betaproteobacteria</taxon>
        <taxon>Nitrosomonadales</taxon>
        <taxon>Thiobacillaceae</taxon>
        <taxon>Thiobacillus</taxon>
    </lineage>
</organism>
<protein>
    <recommendedName>
        <fullName evidence="1">Large ribosomal subunit protein uL11</fullName>
    </recommendedName>
    <alternativeName>
        <fullName evidence="2">50S ribosomal protein L11</fullName>
    </alternativeName>
</protein>
<keyword id="KW-0488">Methylation</keyword>
<keyword id="KW-1185">Reference proteome</keyword>
<keyword id="KW-0687">Ribonucleoprotein</keyword>
<keyword id="KW-0689">Ribosomal protein</keyword>
<keyword id="KW-0694">RNA-binding</keyword>
<keyword id="KW-0699">rRNA-binding</keyword>
<gene>
    <name evidence="1" type="primary">rplK</name>
    <name type="ordered locus">Tbd_0394</name>
</gene>
<evidence type="ECO:0000255" key="1">
    <source>
        <dbReference type="HAMAP-Rule" id="MF_00736"/>
    </source>
</evidence>
<evidence type="ECO:0000305" key="2"/>
<accession>Q3SF21</accession>
<comment type="function">
    <text evidence="1">Forms part of the ribosomal stalk which helps the ribosome interact with GTP-bound translation factors.</text>
</comment>
<comment type="subunit">
    <text evidence="1">Part of the ribosomal stalk of the 50S ribosomal subunit. Interacts with L10 and the large rRNA to form the base of the stalk. L10 forms an elongated spine to which L12 dimers bind in a sequential fashion forming a multimeric L10(L12)X complex.</text>
</comment>
<comment type="PTM">
    <text evidence="1">One or more lysine residues are methylated.</text>
</comment>
<comment type="similarity">
    <text evidence="1">Belongs to the universal ribosomal protein uL11 family.</text>
</comment>